<sequence length="161" mass="18384">ADKERAQRATSNVFARLPQKLMQEMKEAFTMIDQNRDGFIDINDLKEMFSSLGRTPDDKELTAMLKEAPGPLNFTMFLSIFSDKLSGTDTEETLRNAFAMFDELDTKKLNIEYIKDLLENMGDNFTKDEMRMTFKEAPVTGGKFDYVKFTAMIKGSGEEEA</sequence>
<name>MLRA_MIZYE</name>
<reference key="1">
    <citation type="journal article" date="1985" name="J. Biochem.">
        <title>Amino acid sequences of the two kinds of regulatory light chains of adductor smooth muscle myosin from Patinopecten yessoensis.</title>
        <authorList>
            <person name="Miyanishi T."/>
            <person name="Maita T."/>
            <person name="Morita F."/>
            <person name="Kondo S."/>
            <person name="Matsuda G."/>
        </authorList>
    </citation>
    <scope>PROTEIN SEQUENCE</scope>
</reference>
<reference key="2">
    <citation type="journal article" date="1985" name="J. Biochem.">
        <title>Calcium binding and conformation of regulatory light chains of smooth muscle myosin of scallop.</title>
        <authorList>
            <person name="Morita F."/>
            <person name="Kondo S."/>
            <person name="Tomari K."/>
            <person name="Minova O."/>
            <person name="Ikura M."/>
            <person name="Hikichi K."/>
        </authorList>
    </citation>
    <scope>CALCIUM-BINDING DATA</scope>
</reference>
<evidence type="ECO:0000255" key="1">
    <source>
        <dbReference type="PROSITE-ProRule" id="PRU00448"/>
    </source>
</evidence>
<evidence type="ECO:0000269" key="2">
    <source>
    </source>
</evidence>
<proteinExistence type="evidence at protein level"/>
<organism>
    <name type="scientific">Mizuhopecten yessoensis</name>
    <name type="common">Japanese scallop</name>
    <name type="synonym">Patinopecten yessoensis</name>
    <dbReference type="NCBI Taxonomy" id="6573"/>
    <lineage>
        <taxon>Eukaryota</taxon>
        <taxon>Metazoa</taxon>
        <taxon>Spiralia</taxon>
        <taxon>Lophotrochozoa</taxon>
        <taxon>Mollusca</taxon>
        <taxon>Bivalvia</taxon>
        <taxon>Autobranchia</taxon>
        <taxon>Pteriomorphia</taxon>
        <taxon>Pectinida</taxon>
        <taxon>Pectinoidea</taxon>
        <taxon>Pectinidae</taxon>
        <taxon>Mizuhopecten</taxon>
    </lineage>
</organism>
<accession>P04113</accession>
<keyword id="KW-0106">Calcium</keyword>
<keyword id="KW-0903">Direct protein sequencing</keyword>
<keyword id="KW-0479">Metal-binding</keyword>
<keyword id="KW-0505">Motor protein</keyword>
<keyword id="KW-0514">Muscle protein</keyword>
<keyword id="KW-0518">Myosin</keyword>
<keyword id="KW-0677">Repeat</keyword>
<comment type="function">
    <text>In molluscan muscle, calcium regulation is associated with myosin rather than with actin. Muscle myosin contains two types of light chains: the catalytic light chain, essential for ATPase activity, and the regulatory light chain, a calcium-binding protein responsible for Ca(2+) dependent binding and Ca(2+) dependent Mg-ATPase activity.</text>
</comment>
<comment type="miscellaneous">
    <text>Smooth muscle myosin from the scallop adductor muscle contains two kinds of RLC proteins, A and B. Because RLCA hydrolyzes ATP and superprecipitates more slowly than RLCB, myosins containing RLCA are thought to induce the catch mechanism, a tonic contraction characterizing smooth muscle that is maintained with very slow ATP hydrolysis.</text>
</comment>
<comment type="miscellaneous">
    <text>The calcium affinity of the smooth muscle RLC is approximately 10 times that of the RLC of striated muscle.</text>
</comment>
<protein>
    <recommendedName>
        <fullName>Myosin regulatory light chain A, smooth adductor muscle</fullName>
    </recommendedName>
</protein>
<feature type="chain" id="PRO_0000198755" description="Myosin regulatory light chain A, smooth adductor muscle">
    <location>
        <begin position="1"/>
        <end position="161"/>
    </location>
</feature>
<feature type="domain" description="EF-hand 1" evidence="1">
    <location>
        <begin position="20"/>
        <end position="55"/>
    </location>
</feature>
<feature type="domain" description="EF-hand 2" evidence="1">
    <location>
        <begin position="89"/>
        <end position="124"/>
    </location>
</feature>
<feature type="binding site" evidence="1">
    <location>
        <position position="33"/>
    </location>
    <ligand>
        <name>Ca(2+)</name>
        <dbReference type="ChEBI" id="CHEBI:29108"/>
    </ligand>
</feature>
<feature type="binding site" evidence="1">
    <location>
        <position position="35"/>
    </location>
    <ligand>
        <name>Ca(2+)</name>
        <dbReference type="ChEBI" id="CHEBI:29108"/>
    </ligand>
</feature>
<feature type="binding site" evidence="1">
    <location>
        <position position="37"/>
    </location>
    <ligand>
        <name>Ca(2+)</name>
        <dbReference type="ChEBI" id="CHEBI:29108"/>
    </ligand>
</feature>
<feature type="binding site" evidence="1">
    <location>
        <position position="44"/>
    </location>
    <ligand>
        <name>Ca(2+)</name>
        <dbReference type="ChEBI" id="CHEBI:29108"/>
    </ligand>
</feature>
<feature type="modified residue" description="Blocked amino end (Ala)" evidence="2">
    <location>
        <position position="1"/>
    </location>
</feature>
<dbReference type="PIR" id="A03048">
    <property type="entry name" value="MOSWLA"/>
</dbReference>
<dbReference type="SMR" id="P04113"/>
<dbReference type="EnsemblMetazoa" id="XM_021495155.1">
    <property type="protein sequence ID" value="XP_021350830.1"/>
    <property type="gene ID" value="LOC110448741"/>
</dbReference>
<dbReference type="OrthoDB" id="429467at2759"/>
<dbReference type="GO" id="GO:0016459">
    <property type="term" value="C:myosin complex"/>
    <property type="evidence" value="ECO:0007669"/>
    <property type="project" value="UniProtKB-KW"/>
</dbReference>
<dbReference type="GO" id="GO:0005509">
    <property type="term" value="F:calcium ion binding"/>
    <property type="evidence" value="ECO:0007669"/>
    <property type="project" value="InterPro"/>
</dbReference>
<dbReference type="FunFam" id="1.10.238.10:FF:000007">
    <property type="entry name" value="Putative myosin regulatory light chain sqh"/>
    <property type="match status" value="1"/>
</dbReference>
<dbReference type="Gene3D" id="1.10.238.10">
    <property type="entry name" value="EF-hand"/>
    <property type="match status" value="2"/>
</dbReference>
<dbReference type="InterPro" id="IPR011992">
    <property type="entry name" value="EF-hand-dom_pair"/>
</dbReference>
<dbReference type="InterPro" id="IPR018247">
    <property type="entry name" value="EF_Hand_1_Ca_BS"/>
</dbReference>
<dbReference type="InterPro" id="IPR002048">
    <property type="entry name" value="EF_hand_dom"/>
</dbReference>
<dbReference type="InterPro" id="IPR050403">
    <property type="entry name" value="Myosin_RLC"/>
</dbReference>
<dbReference type="PANTHER" id="PTHR23049">
    <property type="entry name" value="MYOSIN REGULATORY LIGHT CHAIN 2"/>
    <property type="match status" value="1"/>
</dbReference>
<dbReference type="Pfam" id="PF13499">
    <property type="entry name" value="EF-hand_7"/>
    <property type="match status" value="1"/>
</dbReference>
<dbReference type="SMART" id="SM00054">
    <property type="entry name" value="EFh"/>
    <property type="match status" value="2"/>
</dbReference>
<dbReference type="SUPFAM" id="SSF47473">
    <property type="entry name" value="EF-hand"/>
    <property type="match status" value="1"/>
</dbReference>
<dbReference type="PROSITE" id="PS00018">
    <property type="entry name" value="EF_HAND_1"/>
    <property type="match status" value="1"/>
</dbReference>
<dbReference type="PROSITE" id="PS50222">
    <property type="entry name" value="EF_HAND_2"/>
    <property type="match status" value="2"/>
</dbReference>